<protein>
    <recommendedName>
        <fullName evidence="8">Guanine nucleotide exchange protein SMCR8</fullName>
    </recommendedName>
    <alternativeName>
        <fullName>Smith-Magenis syndrome chromosomal region candidate gene 8 protein homolog</fullName>
    </alternativeName>
</protein>
<gene>
    <name type="primary">Smcr8</name>
</gene>
<feature type="chain" id="PRO_0000287470" description="Guanine nucleotide exchange protein SMCR8">
    <location>
        <begin position="1"/>
        <end position="935"/>
    </location>
</feature>
<feature type="domain" description="uDENN FLCN/SMCR8-type" evidence="2">
    <location>
        <begin position="48"/>
        <end position="220"/>
    </location>
</feature>
<feature type="domain" description="cDENN FLCN/SMCR8-type" evidence="2">
    <location>
        <begin position="318"/>
        <end position="833"/>
    </location>
</feature>
<feature type="domain" description="dDENN FLCN/SMCR8-type" evidence="2">
    <location>
        <begin position="842"/>
        <end position="908"/>
    </location>
</feature>
<feature type="region of interest" description="Required for the homodimerization of the C9orf72-SMCR8 complex" evidence="1">
    <location>
        <begin position="1"/>
        <end position="349"/>
    </location>
</feature>
<feature type="region of interest" description="Disordered" evidence="3">
    <location>
        <begin position="257"/>
        <end position="291"/>
    </location>
</feature>
<feature type="region of interest" description="Disordered" evidence="3">
    <location>
        <begin position="383"/>
        <end position="402"/>
    </location>
</feature>
<feature type="region of interest" description="Disordered" evidence="3">
    <location>
        <begin position="677"/>
        <end position="699"/>
    </location>
</feature>
<feature type="region of interest" description="Interacts with WDR41 within the C9orf72-SMCR8 complex" evidence="1">
    <location>
        <begin position="860"/>
        <end position="912"/>
    </location>
</feature>
<feature type="compositionally biased region" description="Polar residues" evidence="3">
    <location>
        <begin position="277"/>
        <end position="289"/>
    </location>
</feature>
<feature type="compositionally biased region" description="Polar residues" evidence="3">
    <location>
        <begin position="677"/>
        <end position="686"/>
    </location>
</feature>
<feature type="modified residue" description="Phosphoserine" evidence="10">
    <location>
        <position position="416"/>
    </location>
</feature>
<feature type="modified residue" description="Phosphoserine" evidence="1">
    <location>
        <position position="467"/>
    </location>
</feature>
<feature type="modified residue" description="Phosphoserine" evidence="1">
    <location>
        <position position="470"/>
    </location>
</feature>
<feature type="modified residue" description="Phosphoserine" evidence="10">
    <location>
        <position position="488"/>
    </location>
</feature>
<feature type="modified residue" description="Phosphoserine" evidence="9 10">
    <location>
        <position position="491"/>
    </location>
</feature>
<feature type="modified residue" description="Phosphoserine" evidence="10">
    <location>
        <position position="497"/>
    </location>
</feature>
<feature type="modified residue" description="Phosphoserine" evidence="10">
    <location>
        <position position="788"/>
    </location>
</feature>
<feature type="modified residue" description="Phosphothreonine; by TBK1" evidence="1">
    <location>
        <position position="794"/>
    </location>
</feature>
<feature type="splice variant" id="VSP_025488" description="In isoform 2." evidence="8">
    <location>
        <begin position="786"/>
        <end position="935"/>
    </location>
</feature>
<feature type="sequence conflict" description="In Ref. 3; AAH85095." evidence="8" ref="3">
    <original>V</original>
    <variation>A</variation>
    <location>
        <position position="7"/>
    </location>
</feature>
<feature type="sequence conflict" description="In Ref. 1; BAE26183." evidence="8" ref="1">
    <original>A</original>
    <variation>T</variation>
    <location>
        <position position="291"/>
    </location>
</feature>
<feature type="sequence conflict" description="In Ref. 1; BAE26183." evidence="8" ref="1">
    <original>V</original>
    <variation>A</variation>
    <location>
        <position position="360"/>
    </location>
</feature>
<feature type="sequence conflict" description="In Ref. 1; BAE26183." evidence="8" ref="1">
    <original>V</original>
    <variation>I</variation>
    <location>
        <position position="506"/>
    </location>
</feature>
<accession>Q3UMB5</accession>
<accession>Q5U4H2</accession>
<accession>Q8BNG6</accession>
<accession>Q8C704</accession>
<organism>
    <name type="scientific">Mus musculus</name>
    <name type="common">Mouse</name>
    <dbReference type="NCBI Taxonomy" id="10090"/>
    <lineage>
        <taxon>Eukaryota</taxon>
        <taxon>Metazoa</taxon>
        <taxon>Chordata</taxon>
        <taxon>Craniata</taxon>
        <taxon>Vertebrata</taxon>
        <taxon>Euteleostomi</taxon>
        <taxon>Mammalia</taxon>
        <taxon>Eutheria</taxon>
        <taxon>Euarchontoglires</taxon>
        <taxon>Glires</taxon>
        <taxon>Rodentia</taxon>
        <taxon>Myomorpha</taxon>
        <taxon>Muroidea</taxon>
        <taxon>Muridae</taxon>
        <taxon>Murinae</taxon>
        <taxon>Mus</taxon>
        <taxon>Mus</taxon>
    </lineage>
</organism>
<proteinExistence type="evidence at protein level"/>
<reference key="1">
    <citation type="journal article" date="2005" name="Science">
        <title>The transcriptional landscape of the mammalian genome.</title>
        <authorList>
            <person name="Carninci P."/>
            <person name="Kasukawa T."/>
            <person name="Katayama S."/>
            <person name="Gough J."/>
            <person name="Frith M.C."/>
            <person name="Maeda N."/>
            <person name="Oyama R."/>
            <person name="Ravasi T."/>
            <person name="Lenhard B."/>
            <person name="Wells C."/>
            <person name="Kodzius R."/>
            <person name="Shimokawa K."/>
            <person name="Bajic V.B."/>
            <person name="Brenner S.E."/>
            <person name="Batalov S."/>
            <person name="Forrest A.R."/>
            <person name="Zavolan M."/>
            <person name="Davis M.J."/>
            <person name="Wilming L.G."/>
            <person name="Aidinis V."/>
            <person name="Allen J.E."/>
            <person name="Ambesi-Impiombato A."/>
            <person name="Apweiler R."/>
            <person name="Aturaliya R.N."/>
            <person name="Bailey T.L."/>
            <person name="Bansal M."/>
            <person name="Baxter L."/>
            <person name="Beisel K.W."/>
            <person name="Bersano T."/>
            <person name="Bono H."/>
            <person name="Chalk A.M."/>
            <person name="Chiu K.P."/>
            <person name="Choudhary V."/>
            <person name="Christoffels A."/>
            <person name="Clutterbuck D.R."/>
            <person name="Crowe M.L."/>
            <person name="Dalla E."/>
            <person name="Dalrymple B.P."/>
            <person name="de Bono B."/>
            <person name="Della Gatta G."/>
            <person name="di Bernardo D."/>
            <person name="Down T."/>
            <person name="Engstrom P."/>
            <person name="Fagiolini M."/>
            <person name="Faulkner G."/>
            <person name="Fletcher C.F."/>
            <person name="Fukushima T."/>
            <person name="Furuno M."/>
            <person name="Futaki S."/>
            <person name="Gariboldi M."/>
            <person name="Georgii-Hemming P."/>
            <person name="Gingeras T.R."/>
            <person name="Gojobori T."/>
            <person name="Green R.E."/>
            <person name="Gustincich S."/>
            <person name="Harbers M."/>
            <person name="Hayashi Y."/>
            <person name="Hensch T.K."/>
            <person name="Hirokawa N."/>
            <person name="Hill D."/>
            <person name="Huminiecki L."/>
            <person name="Iacono M."/>
            <person name="Ikeo K."/>
            <person name="Iwama A."/>
            <person name="Ishikawa T."/>
            <person name="Jakt M."/>
            <person name="Kanapin A."/>
            <person name="Katoh M."/>
            <person name="Kawasawa Y."/>
            <person name="Kelso J."/>
            <person name="Kitamura H."/>
            <person name="Kitano H."/>
            <person name="Kollias G."/>
            <person name="Krishnan S.P."/>
            <person name="Kruger A."/>
            <person name="Kummerfeld S.K."/>
            <person name="Kurochkin I.V."/>
            <person name="Lareau L.F."/>
            <person name="Lazarevic D."/>
            <person name="Lipovich L."/>
            <person name="Liu J."/>
            <person name="Liuni S."/>
            <person name="McWilliam S."/>
            <person name="Madan Babu M."/>
            <person name="Madera M."/>
            <person name="Marchionni L."/>
            <person name="Matsuda H."/>
            <person name="Matsuzawa S."/>
            <person name="Miki H."/>
            <person name="Mignone F."/>
            <person name="Miyake S."/>
            <person name="Morris K."/>
            <person name="Mottagui-Tabar S."/>
            <person name="Mulder N."/>
            <person name="Nakano N."/>
            <person name="Nakauchi H."/>
            <person name="Ng P."/>
            <person name="Nilsson R."/>
            <person name="Nishiguchi S."/>
            <person name="Nishikawa S."/>
            <person name="Nori F."/>
            <person name="Ohara O."/>
            <person name="Okazaki Y."/>
            <person name="Orlando V."/>
            <person name="Pang K.C."/>
            <person name="Pavan W.J."/>
            <person name="Pavesi G."/>
            <person name="Pesole G."/>
            <person name="Petrovsky N."/>
            <person name="Piazza S."/>
            <person name="Reed J."/>
            <person name="Reid J.F."/>
            <person name="Ring B.Z."/>
            <person name="Ringwald M."/>
            <person name="Rost B."/>
            <person name="Ruan Y."/>
            <person name="Salzberg S.L."/>
            <person name="Sandelin A."/>
            <person name="Schneider C."/>
            <person name="Schoenbach C."/>
            <person name="Sekiguchi K."/>
            <person name="Semple C.A."/>
            <person name="Seno S."/>
            <person name="Sessa L."/>
            <person name="Sheng Y."/>
            <person name="Shibata Y."/>
            <person name="Shimada H."/>
            <person name="Shimada K."/>
            <person name="Silva D."/>
            <person name="Sinclair B."/>
            <person name="Sperling S."/>
            <person name="Stupka E."/>
            <person name="Sugiura K."/>
            <person name="Sultana R."/>
            <person name="Takenaka Y."/>
            <person name="Taki K."/>
            <person name="Tammoja K."/>
            <person name="Tan S.L."/>
            <person name="Tang S."/>
            <person name="Taylor M.S."/>
            <person name="Tegner J."/>
            <person name="Teichmann S.A."/>
            <person name="Ueda H.R."/>
            <person name="van Nimwegen E."/>
            <person name="Verardo R."/>
            <person name="Wei C.L."/>
            <person name="Yagi K."/>
            <person name="Yamanishi H."/>
            <person name="Zabarovsky E."/>
            <person name="Zhu S."/>
            <person name="Zimmer A."/>
            <person name="Hide W."/>
            <person name="Bult C."/>
            <person name="Grimmond S.M."/>
            <person name="Teasdale R.D."/>
            <person name="Liu E.T."/>
            <person name="Brusic V."/>
            <person name="Quackenbush J."/>
            <person name="Wahlestedt C."/>
            <person name="Mattick J.S."/>
            <person name="Hume D.A."/>
            <person name="Kai C."/>
            <person name="Sasaki D."/>
            <person name="Tomaru Y."/>
            <person name="Fukuda S."/>
            <person name="Kanamori-Katayama M."/>
            <person name="Suzuki M."/>
            <person name="Aoki J."/>
            <person name="Arakawa T."/>
            <person name="Iida J."/>
            <person name="Imamura K."/>
            <person name="Itoh M."/>
            <person name="Kato T."/>
            <person name="Kawaji H."/>
            <person name="Kawagashira N."/>
            <person name="Kawashima T."/>
            <person name="Kojima M."/>
            <person name="Kondo S."/>
            <person name="Konno H."/>
            <person name="Nakano K."/>
            <person name="Ninomiya N."/>
            <person name="Nishio T."/>
            <person name="Okada M."/>
            <person name="Plessy C."/>
            <person name="Shibata K."/>
            <person name="Shiraki T."/>
            <person name="Suzuki S."/>
            <person name="Tagami M."/>
            <person name="Waki K."/>
            <person name="Watahiki A."/>
            <person name="Okamura-Oho Y."/>
            <person name="Suzuki H."/>
            <person name="Kawai J."/>
            <person name="Hayashizaki Y."/>
        </authorList>
    </citation>
    <scope>NUCLEOTIDE SEQUENCE [LARGE SCALE MRNA] (ISOFORMS 1 AND 2)</scope>
    <source>
        <strain>C57BL/6J</strain>
        <tissue>Kidney</tissue>
        <tissue>Mammary gland</tissue>
    </source>
</reference>
<reference key="2">
    <citation type="journal article" date="2009" name="PLoS Biol.">
        <title>Lineage-specific biology revealed by a finished genome assembly of the mouse.</title>
        <authorList>
            <person name="Church D.M."/>
            <person name="Goodstadt L."/>
            <person name="Hillier L.W."/>
            <person name="Zody M.C."/>
            <person name="Goldstein S."/>
            <person name="She X."/>
            <person name="Bult C.J."/>
            <person name="Agarwala R."/>
            <person name="Cherry J.L."/>
            <person name="DiCuccio M."/>
            <person name="Hlavina W."/>
            <person name="Kapustin Y."/>
            <person name="Meric P."/>
            <person name="Maglott D."/>
            <person name="Birtle Z."/>
            <person name="Marques A.C."/>
            <person name="Graves T."/>
            <person name="Zhou S."/>
            <person name="Teague B."/>
            <person name="Potamousis K."/>
            <person name="Churas C."/>
            <person name="Place M."/>
            <person name="Herschleb J."/>
            <person name="Runnheim R."/>
            <person name="Forrest D."/>
            <person name="Amos-Landgraf J."/>
            <person name="Schwartz D.C."/>
            <person name="Cheng Z."/>
            <person name="Lindblad-Toh K."/>
            <person name="Eichler E.E."/>
            <person name="Ponting C.P."/>
        </authorList>
    </citation>
    <scope>NUCLEOTIDE SEQUENCE [LARGE SCALE GENOMIC DNA]</scope>
    <source>
        <strain>C57BL/6J</strain>
    </source>
</reference>
<reference key="3">
    <citation type="journal article" date="2004" name="Genome Res.">
        <title>The status, quality, and expansion of the NIH full-length cDNA project: the Mammalian Gene Collection (MGC).</title>
        <authorList>
            <consortium name="The MGC Project Team"/>
        </authorList>
    </citation>
    <scope>NUCLEOTIDE SEQUENCE [LARGE SCALE MRNA] (ISOFORM 1)</scope>
    <source>
        <strain>C57BL/6J</strain>
        <tissue>Embryonic germ cell</tissue>
    </source>
</reference>
<reference key="4">
    <citation type="journal article" date="2002" name="Genome Res.">
        <title>Genes in a refined Smith-Magenis syndrome critical deletion interval on chromosome 17p11.2 and the syntenic region of the mouse.</title>
        <authorList>
            <person name="Bi W."/>
            <person name="Yan J."/>
            <person name="Stankiewicz P."/>
            <person name="Park S.-S."/>
            <person name="Walz K."/>
            <person name="Boerkoel C.F."/>
            <person name="Potocki L."/>
            <person name="Shaffer L.G."/>
            <person name="Devriendt K."/>
            <person name="Nowaczyk M.J.M."/>
            <person name="Inoue K."/>
            <person name="Lupski J.R."/>
        </authorList>
    </citation>
    <scope>TISSUE SPECIFICITY</scope>
</reference>
<reference key="5">
    <citation type="journal article" date="2007" name="Proc. Natl. Acad. Sci. U.S.A.">
        <title>Large-scale phosphorylation analysis of mouse liver.</title>
        <authorList>
            <person name="Villen J."/>
            <person name="Beausoleil S.A."/>
            <person name="Gerber S.A."/>
            <person name="Gygi S.P."/>
        </authorList>
    </citation>
    <scope>PHOSPHORYLATION [LARGE SCALE ANALYSIS] AT SER-491</scope>
    <scope>IDENTIFICATION BY MASS SPECTROMETRY [LARGE SCALE ANALYSIS]</scope>
    <source>
        <tissue>Liver</tissue>
    </source>
</reference>
<reference key="6">
    <citation type="journal article" date="2010" name="Cell">
        <title>A tissue-specific atlas of mouse protein phosphorylation and expression.</title>
        <authorList>
            <person name="Huttlin E.L."/>
            <person name="Jedrychowski M.P."/>
            <person name="Elias J.E."/>
            <person name="Goswami T."/>
            <person name="Rad R."/>
            <person name="Beausoleil S.A."/>
            <person name="Villen J."/>
            <person name="Haas W."/>
            <person name="Sowa M.E."/>
            <person name="Gygi S.P."/>
        </authorList>
    </citation>
    <scope>PHOSPHORYLATION [LARGE SCALE ANALYSIS] AT SER-416; SER-488; SER-491; SER-497 AND SER-788</scope>
    <scope>IDENTIFICATION BY MASS SPECTROMETRY [LARGE SCALE ANALYSIS]</scope>
    <source>
        <tissue>Brain</tissue>
        <tissue>Brown adipose tissue</tissue>
        <tissue>Heart</tissue>
        <tissue>Kidney</tissue>
        <tissue>Liver</tissue>
        <tissue>Lung</tissue>
        <tissue>Pancreas</tissue>
        <tissue>Spleen</tissue>
        <tissue>Testis</tissue>
    </source>
</reference>
<reference key="7">
    <citation type="journal article" date="2016" name="PLoS Genet.">
        <title>Loss of C9orf72 enhances autophagic activity via deregulated mTOR and TFEB signaling.</title>
        <authorList>
            <person name="Ugolino J."/>
            <person name="Ji Y.J."/>
            <person name="Conchina K."/>
            <person name="Chu J."/>
            <person name="Nirujogi R.S."/>
            <person name="Pandey A."/>
            <person name="Brady N.R."/>
            <person name="Hamacher-Brady A."/>
            <person name="Wang J."/>
        </authorList>
    </citation>
    <scope>INTERACTION WITH C9ORF72</scope>
</reference>
<reference key="8">
    <citation type="journal article" date="2016" name="Sci. Adv.">
        <title>A C9ORF72/SMCR8-containing complex regulates ULK1 and plays a dual role in autophagy.</title>
        <authorList>
            <person name="Yang M."/>
            <person name="Liang C."/>
            <person name="Swaminathan K."/>
            <person name="Herrlinger S."/>
            <person name="Lai F."/>
            <person name="Shiekhattar R."/>
            <person name="Chen J.F."/>
        </authorList>
    </citation>
    <scope>FUNCTION</scope>
    <scope>SUBCELLULAR LOCATION</scope>
    <scope>DISRUPTION PHENOTYPE</scope>
</reference>
<reference key="9">
    <citation type="journal article" date="2019" name="Acta Neuropathol. Commun.">
        <title>Synaptic localization of C9orf72 regulates post-synaptic glutamate receptor 1 levels.</title>
        <authorList>
            <person name="Xiao S."/>
            <person name="McKeever P.M."/>
            <person name="Lau A."/>
            <person name="Robertson J."/>
        </authorList>
    </citation>
    <scope>INTERACTION WITH DLG4</scope>
    <scope>SUBCELLULAR LOCATION</scope>
    <scope>TISSUE SPECIFICITY</scope>
</reference>
<evidence type="ECO:0000250" key="1">
    <source>
        <dbReference type="UniProtKB" id="Q8TEV9"/>
    </source>
</evidence>
<evidence type="ECO:0000255" key="2">
    <source>
        <dbReference type="PROSITE-ProRule" id="PRU01178"/>
    </source>
</evidence>
<evidence type="ECO:0000256" key="3">
    <source>
        <dbReference type="SAM" id="MobiDB-lite"/>
    </source>
</evidence>
<evidence type="ECO:0000269" key="4">
    <source>
    </source>
</evidence>
<evidence type="ECO:0000269" key="5">
    <source>
    </source>
</evidence>
<evidence type="ECO:0000269" key="6">
    <source>
    </source>
</evidence>
<evidence type="ECO:0000269" key="7">
    <source>
    </source>
</evidence>
<evidence type="ECO:0000305" key="8"/>
<evidence type="ECO:0007744" key="9">
    <source>
    </source>
</evidence>
<evidence type="ECO:0007744" key="10">
    <source>
    </source>
</evidence>
<comment type="function">
    <text evidence="1 5">Component of the C9orf72-SMCR8 complex, a complex that has guanine nucleotide exchange factor (GEF) activity and regulates autophagy (PubMed:27617292). In the complex, C9orf72 and SMCR8 probably constitute the catalytic subunits that promote the exchange of GDP to GTP, converting inactive GDP-bound RAB8A and RAB39B into their active GTP-bound form, thereby promoting autophagosome maturation (By similarity). The C9orf72-SMCR8 complex also acts as a negative regulator of autophagy initiation by interacting with the ULK1/ATG1 kinase complex and inhibiting its protein kinase activity (PubMed:27617292). As part of the C9orf72-SMCR8 complex, stimulates RAB8A and RAB11A GTPase activity in vitro (By similarity). Acts as a regulator of mTORC1 signaling by promoting phosphorylation of mTORC1 substrates (By similarity). In addition to its activity in the cytoplasm within the C9orf72-SMCR8 complex, SMCR8 also localizes in the nucleus, where it associates with chromatin and negatively regulates expression of suppresses ULK1 and WIPI2 genes (By similarity).</text>
</comment>
<comment type="subunit">
    <text evidence="1 6 7">Component of the C9orf72-SMCR8 complex, at least composed of C9orf72, SMCR8 and WDR41 (Probable). The complex is formed of two protomers, each individually consisting of one molecule each of C9orf72, SMCR8 and WDR41 (By similarity). The protomers homodimerize via an interaction between C9orf72 (via C-terminus) and SMCR8 (via N-terminus) (By similarity). Within each protomer SMCR8 (via DENN domain) acts as a bridging protein between WDR41 (via C-terminus and N-terminus) and C9orf72 (via C-terminus) (By similarity). The C9orf72-SMCR8 complex associates with the ULK1/ATG1 kinase complex (By similarity). Interacts with C9orf72; the interaction is direct (PubMed:27875531). Interacts with DLG4/PSD-95 (PubMed:31651360).</text>
</comment>
<comment type="subcellular location">
    <subcellularLocation>
        <location evidence="5">Cytoplasm</location>
    </subcellularLocation>
    <subcellularLocation>
        <location evidence="1">Nucleus</location>
    </subcellularLocation>
    <subcellularLocation>
        <location evidence="7">Presynapse</location>
    </subcellularLocation>
    <subcellularLocation>
        <location evidence="7">Postsynapse</location>
    </subcellularLocation>
    <text evidence="1">Localizes mainly in the cytoplasm.</text>
</comment>
<comment type="alternative products">
    <event type="alternative splicing"/>
    <isoform>
        <id>Q3UMB5-1</id>
        <name>1</name>
        <sequence type="displayed"/>
    </isoform>
    <isoform>
        <id>Q3UMB5-2</id>
        <name>2</name>
        <sequence type="described" ref="VSP_025488"/>
    </isoform>
</comment>
<comment type="tissue specificity">
    <text evidence="4 7">Widely expressed (PubMed:11997338). Expressed in the forebrain and hippocampus (at protein level) (PubMed:31651360).</text>
</comment>
<comment type="PTM">
    <text evidence="1">Phosphorylation by TBK1 is required to promote autophagosome maturation. Phosphorylated by ULK1.</text>
</comment>
<comment type="disruption phenotype">
    <text evidence="5">Cells lacking display impaired autophagy induction.</text>
</comment>
<comment type="similarity">
    <text evidence="8">Belongs to the SMCR8 family.</text>
</comment>
<keyword id="KW-0025">Alternative splicing</keyword>
<keyword id="KW-0072">Autophagy</keyword>
<keyword id="KW-0966">Cell projection</keyword>
<keyword id="KW-0963">Cytoplasm</keyword>
<keyword id="KW-0344">Guanine-nucleotide releasing factor</keyword>
<keyword id="KW-0539">Nucleus</keyword>
<keyword id="KW-0597">Phosphoprotein</keyword>
<keyword id="KW-1185">Reference proteome</keyword>
<keyword id="KW-0770">Synapse</keyword>
<keyword id="KW-0804">Transcription</keyword>
<keyword id="KW-0805">Transcription regulation</keyword>
<sequence length="935" mass="104957">MISAPDVVAFTKEDEYEEEPYNEPALPEEYSVPLFPYASQGANPWSKLSGAKFSRDFILISEFSEQVGPQPLLTIPNDTKVFGTFDLNYFSLRIMSVDYQASFVGHPPGSAYPKLNFVEDSKVVLGDSKEGAFAYVHHLTLYDLEARGFVRPFCMAYISADQHKIMQQFQELSAEFSKASECLKMGNRKAFAGELEKKLKDLDYTRTVLHTETEIQKKANDKGFYSSQAIEKANELANVEKSIIEHQDLLRQIRSYPRQKTKIPDLQPGDTEHTQDQADQVSTTSNPEESANADLYTCRPAYTPKLIKAKSTKCFDKKLKTLEELCDTEYFTQTLAQLSHIEHMFRGDLCYLLTSQIDRVLRKQQPITNFLFEDFVEVDDRMEKQENVPSQPSQDRLPPKPVEECPIPKVLISVGSYKSSVESVLIKMEQELGDEEYTGVEATEARSFDPQENLDYLDMDMKGSISSGESIEVLGTEKSASVLSKSDSQASLTVPLSPHVVRSKAVSHRTISEDSIEVLSTCPSEALIPDDFKASYPSAINEEEAYADNEGAIHFQASAGSPEPDETQEGNLENIPSQIDSSCCIGKESEGHLVPLPTPAYTLSDEDSVVSIPPQRYIQKDQGLHVDFGVENTDPSPRDNSCEMFPAYELDPSCLLASRDVSKMSLDNYSDTTSYMGSAASTSSDRIPSAPPAGLSSERHKKRAGQNALKFIRQYPFAHPAIYSLLSGRTLVVLGEDETIVRKLVTALSIFVPNYGCYAKPVKHWISSPLHIMDFQKWKLIGLQRVASPANVGTLHTLSRYSRYTSILDLDSKTLRCPLYRGTLVPRLADHRTQIKRGSTYYLHVQSMLTQLCSKAFLYTFCHHLHLPAHSEETQEAVASRQTSFLKLNLGLVNEDIRVVQYLAELLKLHYMQESPGTTHPLLRFDYVPSFLYKI</sequence>
<dbReference type="EMBL" id="AK052754">
    <property type="protein sequence ID" value="BAC35133.1"/>
    <property type="molecule type" value="mRNA"/>
</dbReference>
<dbReference type="EMBL" id="AK083739">
    <property type="protein sequence ID" value="BAC39010.1"/>
    <property type="molecule type" value="mRNA"/>
</dbReference>
<dbReference type="EMBL" id="AK145010">
    <property type="protein sequence ID" value="BAE26183.1"/>
    <property type="molecule type" value="mRNA"/>
</dbReference>
<dbReference type="EMBL" id="AL596215">
    <property type="status" value="NOT_ANNOTATED_CDS"/>
    <property type="molecule type" value="Genomic_DNA"/>
</dbReference>
<dbReference type="EMBL" id="BC085095">
    <property type="protein sequence ID" value="AAH85095.1"/>
    <property type="molecule type" value="mRNA"/>
</dbReference>
<dbReference type="CCDS" id="CCDS24798.1">
    <molecule id="Q3UMB5-2"/>
</dbReference>
<dbReference type="CCDS" id="CCDS48814.1">
    <molecule id="Q3UMB5-1"/>
</dbReference>
<dbReference type="RefSeq" id="NP_001078909.1">
    <molecule id="Q3UMB5-1"/>
    <property type="nucleotide sequence ID" value="NM_001085440.1"/>
</dbReference>
<dbReference type="RefSeq" id="NP_780700.1">
    <molecule id="Q3UMB5-2"/>
    <property type="nucleotide sequence ID" value="NM_175491.4"/>
</dbReference>
<dbReference type="SMR" id="Q3UMB5"/>
<dbReference type="BioGRID" id="231908">
    <property type="interactions" value="6"/>
</dbReference>
<dbReference type="ComplexPortal" id="CPX-3962">
    <property type="entry name" value="C9orf72-SMCR8 complex"/>
</dbReference>
<dbReference type="FunCoup" id="Q3UMB5">
    <property type="interactions" value="2536"/>
</dbReference>
<dbReference type="IntAct" id="Q3UMB5">
    <property type="interactions" value="5"/>
</dbReference>
<dbReference type="MINT" id="Q3UMB5"/>
<dbReference type="STRING" id="10090.ENSMUSP00000055926"/>
<dbReference type="GlyGen" id="Q3UMB5">
    <property type="glycosylation" value="2 sites, 1 N-linked glycan (1 site)"/>
</dbReference>
<dbReference type="iPTMnet" id="Q3UMB5"/>
<dbReference type="PhosphoSitePlus" id="Q3UMB5"/>
<dbReference type="jPOST" id="Q3UMB5"/>
<dbReference type="PaxDb" id="10090-ENSMUSP00000099728"/>
<dbReference type="PeptideAtlas" id="Q3UMB5"/>
<dbReference type="ProteomicsDB" id="257267">
    <molecule id="Q3UMB5-1"/>
</dbReference>
<dbReference type="ProteomicsDB" id="257268">
    <molecule id="Q3UMB5-2"/>
</dbReference>
<dbReference type="Pumba" id="Q3UMB5"/>
<dbReference type="Antibodypedia" id="13526">
    <property type="antibodies" value="37 antibodies from 15 providers"/>
</dbReference>
<dbReference type="DNASU" id="237782"/>
<dbReference type="Ensembl" id="ENSMUST00000056907.7">
    <molecule id="Q3UMB5-1"/>
    <property type="protein sequence ID" value="ENSMUSP00000055926.7"/>
    <property type="gene ID" value="ENSMUSG00000049323.9"/>
</dbReference>
<dbReference type="Ensembl" id="ENSMUST00000102667.5">
    <molecule id="Q3UMB5-2"/>
    <property type="protein sequence ID" value="ENSMUSP00000099728.4"/>
    <property type="gene ID" value="ENSMUSG00000049323.9"/>
</dbReference>
<dbReference type="GeneID" id="237782"/>
<dbReference type="KEGG" id="mmu:237782"/>
<dbReference type="UCSC" id="uc007jgn.1">
    <molecule id="Q3UMB5-1"/>
    <property type="organism name" value="mouse"/>
</dbReference>
<dbReference type="AGR" id="MGI:2444720"/>
<dbReference type="CTD" id="140775"/>
<dbReference type="MGI" id="MGI:2444720">
    <property type="gene designation" value="Smcr8"/>
</dbReference>
<dbReference type="VEuPathDB" id="HostDB:ENSMUSG00000049323"/>
<dbReference type="eggNOG" id="ENOG502QSW2">
    <property type="taxonomic scope" value="Eukaryota"/>
</dbReference>
<dbReference type="GeneTree" id="ENSGT00390000010052"/>
<dbReference type="HOGENOM" id="CLU_013891_0_0_1"/>
<dbReference type="InParanoid" id="Q3UMB5"/>
<dbReference type="OMA" id="KPVKHWV"/>
<dbReference type="OrthoDB" id="2289278at2759"/>
<dbReference type="PhylomeDB" id="Q3UMB5"/>
<dbReference type="TreeFam" id="TF330880"/>
<dbReference type="BioGRID-ORCS" id="237782">
    <property type="hits" value="3 hits in 76 CRISPR screens"/>
</dbReference>
<dbReference type="ChiTaRS" id="Smcr8">
    <property type="organism name" value="mouse"/>
</dbReference>
<dbReference type="PRO" id="PR:Q3UMB5"/>
<dbReference type="Proteomes" id="UP000000589">
    <property type="component" value="Chromosome 11"/>
</dbReference>
<dbReference type="RNAct" id="Q3UMB5">
    <property type="molecule type" value="protein"/>
</dbReference>
<dbReference type="Bgee" id="ENSMUSG00000049323">
    <property type="expression patterns" value="Expressed in embryonic post-anal tail and 223 other cell types or tissues"/>
</dbReference>
<dbReference type="GO" id="GO:1990316">
    <property type="term" value="C:Atg1/ULK1 kinase complex"/>
    <property type="evidence" value="ECO:0007669"/>
    <property type="project" value="Ensembl"/>
</dbReference>
<dbReference type="GO" id="GO:0042995">
    <property type="term" value="C:cell projection"/>
    <property type="evidence" value="ECO:0007669"/>
    <property type="project" value="UniProtKB-KW"/>
</dbReference>
<dbReference type="GO" id="GO:0000785">
    <property type="term" value="C:chromatin"/>
    <property type="evidence" value="ECO:0007669"/>
    <property type="project" value="Ensembl"/>
</dbReference>
<dbReference type="GO" id="GO:0005737">
    <property type="term" value="C:cytoplasm"/>
    <property type="evidence" value="ECO:0000314"/>
    <property type="project" value="UniProtKB"/>
</dbReference>
<dbReference type="GO" id="GO:0032045">
    <property type="term" value="C:guanyl-nucleotide exchange factor complex"/>
    <property type="evidence" value="ECO:0000266"/>
    <property type="project" value="ComplexPortal"/>
</dbReference>
<dbReference type="GO" id="GO:0005654">
    <property type="term" value="C:nucleoplasm"/>
    <property type="evidence" value="ECO:0007669"/>
    <property type="project" value="Ensembl"/>
</dbReference>
<dbReference type="GO" id="GO:0098794">
    <property type="term" value="C:postsynapse"/>
    <property type="evidence" value="ECO:0000314"/>
    <property type="project" value="UniProtKB"/>
</dbReference>
<dbReference type="GO" id="GO:0098793">
    <property type="term" value="C:presynapse"/>
    <property type="evidence" value="ECO:0000314"/>
    <property type="project" value="UniProtKB"/>
</dbReference>
<dbReference type="GO" id="GO:0005096">
    <property type="term" value="F:GTPase activator activity"/>
    <property type="evidence" value="ECO:0007669"/>
    <property type="project" value="Ensembl"/>
</dbReference>
<dbReference type="GO" id="GO:0005085">
    <property type="term" value="F:guanyl-nucleotide exchange factor activity"/>
    <property type="evidence" value="ECO:0007669"/>
    <property type="project" value="UniProtKB-KW"/>
</dbReference>
<dbReference type="GO" id="GO:0019901">
    <property type="term" value="F:protein kinase binding"/>
    <property type="evidence" value="ECO:0007669"/>
    <property type="project" value="Ensembl"/>
</dbReference>
<dbReference type="GO" id="GO:0004860">
    <property type="term" value="F:protein kinase inhibitor activity"/>
    <property type="evidence" value="ECO:0000250"/>
    <property type="project" value="UniProtKB"/>
</dbReference>
<dbReference type="GO" id="GO:0006914">
    <property type="term" value="P:autophagy"/>
    <property type="evidence" value="ECO:0007669"/>
    <property type="project" value="UniProtKB-KW"/>
</dbReference>
<dbReference type="GO" id="GO:1902902">
    <property type="term" value="P:negative regulation of autophagosome assembly"/>
    <property type="evidence" value="ECO:0000250"/>
    <property type="project" value="UniProtKB"/>
</dbReference>
<dbReference type="GO" id="GO:0045920">
    <property type="term" value="P:negative regulation of exocytosis"/>
    <property type="evidence" value="ECO:0000303"/>
    <property type="project" value="ComplexPortal"/>
</dbReference>
<dbReference type="GO" id="GO:0010629">
    <property type="term" value="P:negative regulation of gene expression"/>
    <property type="evidence" value="ECO:0000250"/>
    <property type="project" value="UniProtKB"/>
</dbReference>
<dbReference type="GO" id="GO:0050777">
    <property type="term" value="P:negative regulation of immune response"/>
    <property type="evidence" value="ECO:0000303"/>
    <property type="project" value="ComplexPortal"/>
</dbReference>
<dbReference type="GO" id="GO:0016242">
    <property type="term" value="P:negative regulation of macroautophagy"/>
    <property type="evidence" value="ECO:0000250"/>
    <property type="project" value="UniProtKB"/>
</dbReference>
<dbReference type="GO" id="GO:1901098">
    <property type="term" value="P:positive regulation of autophagosome maturation"/>
    <property type="evidence" value="ECO:0000250"/>
    <property type="project" value="UniProtKB"/>
</dbReference>
<dbReference type="GO" id="GO:0032008">
    <property type="term" value="P:positive regulation of TOR signaling"/>
    <property type="evidence" value="ECO:0000250"/>
    <property type="project" value="UniProtKB"/>
</dbReference>
<dbReference type="GO" id="GO:0010506">
    <property type="term" value="P:regulation of autophagy"/>
    <property type="evidence" value="ECO:0000315"/>
    <property type="project" value="UniProtKB"/>
</dbReference>
<dbReference type="GO" id="GO:1903432">
    <property type="term" value="P:regulation of TORC1 signaling"/>
    <property type="evidence" value="ECO:0000250"/>
    <property type="project" value="UniProtKB"/>
</dbReference>
<dbReference type="InterPro" id="IPR037521">
    <property type="entry name" value="FLCN/SMCR8_DENN"/>
</dbReference>
<dbReference type="InterPro" id="IPR037520">
    <property type="entry name" value="Folliculin/SMCR8_longin"/>
</dbReference>
<dbReference type="PANTHER" id="PTHR31334:SF1">
    <property type="entry name" value="GUANINE NUCLEOTIDE EXCHANGE PROTEIN SMCR8"/>
    <property type="match status" value="1"/>
</dbReference>
<dbReference type="PANTHER" id="PTHR31334">
    <property type="entry name" value="SMITH-MAGENIS SYNDROME REGION GENE 8 PROTEIN"/>
    <property type="match status" value="1"/>
</dbReference>
<dbReference type="Pfam" id="PF11704">
    <property type="entry name" value="Folliculin"/>
    <property type="match status" value="1"/>
</dbReference>
<dbReference type="PROSITE" id="PS51834">
    <property type="entry name" value="DENN_FLCN_SMCR8"/>
    <property type="match status" value="1"/>
</dbReference>
<name>SMCR8_MOUSE</name>